<proteinExistence type="inferred from homology"/>
<organism>
    <name type="scientific">Desulfatibacillum aliphaticivorans</name>
    <dbReference type="NCBI Taxonomy" id="218208"/>
    <lineage>
        <taxon>Bacteria</taxon>
        <taxon>Pseudomonadati</taxon>
        <taxon>Thermodesulfobacteriota</taxon>
        <taxon>Desulfobacteria</taxon>
        <taxon>Desulfobacterales</taxon>
        <taxon>Desulfatibacillaceae</taxon>
        <taxon>Desulfatibacillum</taxon>
    </lineage>
</organism>
<comment type="function">
    <text evidence="1">Catalyzes the condensation of pantoate with beta-alanine in an ATP-dependent reaction via a pantoyl-adenylate intermediate.</text>
</comment>
<comment type="catalytic activity">
    <reaction evidence="1">
        <text>(R)-pantoate + beta-alanine + ATP = (R)-pantothenate + AMP + diphosphate + H(+)</text>
        <dbReference type="Rhea" id="RHEA:10912"/>
        <dbReference type="ChEBI" id="CHEBI:15378"/>
        <dbReference type="ChEBI" id="CHEBI:15980"/>
        <dbReference type="ChEBI" id="CHEBI:29032"/>
        <dbReference type="ChEBI" id="CHEBI:30616"/>
        <dbReference type="ChEBI" id="CHEBI:33019"/>
        <dbReference type="ChEBI" id="CHEBI:57966"/>
        <dbReference type="ChEBI" id="CHEBI:456215"/>
        <dbReference type="EC" id="6.3.2.1"/>
    </reaction>
</comment>
<comment type="pathway">
    <text evidence="1">Cofactor biosynthesis; (R)-pantothenate biosynthesis; (R)-pantothenate from (R)-pantoate and beta-alanine: step 1/1.</text>
</comment>
<comment type="subunit">
    <text evidence="1">Homodimer.</text>
</comment>
<comment type="subcellular location">
    <subcellularLocation>
        <location evidence="1">Cytoplasm</location>
    </subcellularLocation>
</comment>
<comment type="miscellaneous">
    <text evidence="1">The reaction proceeds by a bi uni uni bi ping pong mechanism.</text>
</comment>
<comment type="similarity">
    <text evidence="1">Belongs to the pantothenate synthetase family.</text>
</comment>
<dbReference type="EC" id="6.3.2.1" evidence="1"/>
<dbReference type="EMBL" id="CP001322">
    <property type="protein sequence ID" value="ACL04944.1"/>
    <property type="molecule type" value="Genomic_DNA"/>
</dbReference>
<dbReference type="RefSeq" id="WP_015948004.1">
    <property type="nucleotide sequence ID" value="NC_011768.1"/>
</dbReference>
<dbReference type="SMR" id="B8FJ17"/>
<dbReference type="KEGG" id="dal:Dalk_3254"/>
<dbReference type="eggNOG" id="COG0414">
    <property type="taxonomic scope" value="Bacteria"/>
</dbReference>
<dbReference type="HOGENOM" id="CLU_047148_0_0_7"/>
<dbReference type="UniPathway" id="UPA00028">
    <property type="reaction ID" value="UER00005"/>
</dbReference>
<dbReference type="Proteomes" id="UP000000739">
    <property type="component" value="Chromosome"/>
</dbReference>
<dbReference type="GO" id="GO:0005829">
    <property type="term" value="C:cytosol"/>
    <property type="evidence" value="ECO:0007669"/>
    <property type="project" value="TreeGrafter"/>
</dbReference>
<dbReference type="GO" id="GO:0005524">
    <property type="term" value="F:ATP binding"/>
    <property type="evidence" value="ECO:0007669"/>
    <property type="project" value="UniProtKB-KW"/>
</dbReference>
<dbReference type="GO" id="GO:0004592">
    <property type="term" value="F:pantoate-beta-alanine ligase activity"/>
    <property type="evidence" value="ECO:0007669"/>
    <property type="project" value="UniProtKB-UniRule"/>
</dbReference>
<dbReference type="GO" id="GO:0015940">
    <property type="term" value="P:pantothenate biosynthetic process"/>
    <property type="evidence" value="ECO:0007669"/>
    <property type="project" value="UniProtKB-UniRule"/>
</dbReference>
<dbReference type="CDD" id="cd00560">
    <property type="entry name" value="PanC"/>
    <property type="match status" value="1"/>
</dbReference>
<dbReference type="FunFam" id="3.30.1300.10:FF:000001">
    <property type="entry name" value="Pantothenate synthetase"/>
    <property type="match status" value="1"/>
</dbReference>
<dbReference type="FunFam" id="3.40.50.620:FF:000114">
    <property type="entry name" value="Pantothenate synthetase"/>
    <property type="match status" value="1"/>
</dbReference>
<dbReference type="Gene3D" id="3.40.50.620">
    <property type="entry name" value="HUPs"/>
    <property type="match status" value="1"/>
</dbReference>
<dbReference type="Gene3D" id="3.30.1300.10">
    <property type="entry name" value="Pantoate-beta-alanine ligase, C-terminal domain"/>
    <property type="match status" value="1"/>
</dbReference>
<dbReference type="HAMAP" id="MF_00158">
    <property type="entry name" value="PanC"/>
    <property type="match status" value="1"/>
</dbReference>
<dbReference type="InterPro" id="IPR004821">
    <property type="entry name" value="Cyt_trans-like"/>
</dbReference>
<dbReference type="InterPro" id="IPR003721">
    <property type="entry name" value="Pantoate_ligase"/>
</dbReference>
<dbReference type="InterPro" id="IPR042176">
    <property type="entry name" value="Pantoate_ligase_C"/>
</dbReference>
<dbReference type="InterPro" id="IPR014729">
    <property type="entry name" value="Rossmann-like_a/b/a_fold"/>
</dbReference>
<dbReference type="NCBIfam" id="TIGR00125">
    <property type="entry name" value="cyt_tran_rel"/>
    <property type="match status" value="1"/>
</dbReference>
<dbReference type="NCBIfam" id="TIGR00018">
    <property type="entry name" value="panC"/>
    <property type="match status" value="1"/>
</dbReference>
<dbReference type="PANTHER" id="PTHR21299">
    <property type="entry name" value="CYTIDYLATE KINASE/PANTOATE-BETA-ALANINE LIGASE"/>
    <property type="match status" value="1"/>
</dbReference>
<dbReference type="PANTHER" id="PTHR21299:SF1">
    <property type="entry name" value="PANTOATE--BETA-ALANINE LIGASE"/>
    <property type="match status" value="1"/>
</dbReference>
<dbReference type="Pfam" id="PF02569">
    <property type="entry name" value="Pantoate_ligase"/>
    <property type="match status" value="1"/>
</dbReference>
<dbReference type="SUPFAM" id="SSF52374">
    <property type="entry name" value="Nucleotidylyl transferase"/>
    <property type="match status" value="1"/>
</dbReference>
<gene>
    <name evidence="1" type="primary">panC</name>
    <name type="ordered locus">Dalk_3254</name>
</gene>
<accession>B8FJ17</accession>
<keyword id="KW-0067">ATP-binding</keyword>
<keyword id="KW-0963">Cytoplasm</keyword>
<keyword id="KW-0436">Ligase</keyword>
<keyword id="KW-0547">Nucleotide-binding</keyword>
<keyword id="KW-0566">Pantothenate biosynthesis</keyword>
<keyword id="KW-1185">Reference proteome</keyword>
<sequence>MEIISDKAAMAARSEAVRREGKTIAFVPTMGYLHEGHLSLLKRGRSLCDYLVLSIFVNPTQFGPNEDLDAYPRDEERDRKVAQEAGVDVIFMPNNEMMYGPNYQTYVALEKLPYHLCGLSRPVHFRGVATVVTKLFNIVRPHTAIFGEKDFQQLAVIRQMVKDLDFGIEIIGGPTVREPDGLAMSSRNAYLTPEQRKDAVALYNSLNQAQEMVSAGGKSAAAILEKASETILAVPGAEIDYAKLCDPATLDDVEAIAGPTLMALAVKIGSTRLIDNKVLEP</sequence>
<name>PANC_DESAL</name>
<feature type="chain" id="PRO_1000118144" description="Pantothenate synthetase">
    <location>
        <begin position="1"/>
        <end position="281"/>
    </location>
</feature>
<feature type="active site" description="Proton donor" evidence="1">
    <location>
        <position position="37"/>
    </location>
</feature>
<feature type="binding site" evidence="1">
    <location>
        <begin position="30"/>
        <end position="37"/>
    </location>
    <ligand>
        <name>ATP</name>
        <dbReference type="ChEBI" id="CHEBI:30616"/>
    </ligand>
</feature>
<feature type="binding site" evidence="1">
    <location>
        <position position="61"/>
    </location>
    <ligand>
        <name>(R)-pantoate</name>
        <dbReference type="ChEBI" id="CHEBI:15980"/>
    </ligand>
</feature>
<feature type="binding site" evidence="1">
    <location>
        <position position="61"/>
    </location>
    <ligand>
        <name>beta-alanine</name>
        <dbReference type="ChEBI" id="CHEBI:57966"/>
    </ligand>
</feature>
<feature type="binding site" evidence="1">
    <location>
        <begin position="147"/>
        <end position="150"/>
    </location>
    <ligand>
        <name>ATP</name>
        <dbReference type="ChEBI" id="CHEBI:30616"/>
    </ligand>
</feature>
<feature type="binding site" evidence="1">
    <location>
        <position position="153"/>
    </location>
    <ligand>
        <name>(R)-pantoate</name>
        <dbReference type="ChEBI" id="CHEBI:15980"/>
    </ligand>
</feature>
<feature type="binding site" evidence="1">
    <location>
        <position position="176"/>
    </location>
    <ligand>
        <name>ATP</name>
        <dbReference type="ChEBI" id="CHEBI:30616"/>
    </ligand>
</feature>
<feature type="binding site" evidence="1">
    <location>
        <begin position="184"/>
        <end position="187"/>
    </location>
    <ligand>
        <name>ATP</name>
        <dbReference type="ChEBI" id="CHEBI:30616"/>
    </ligand>
</feature>
<reference key="1">
    <citation type="journal article" date="2012" name="Environ. Microbiol.">
        <title>The genome sequence of Desulfatibacillum alkenivorans AK-01: a blueprint for anaerobic alkane oxidation.</title>
        <authorList>
            <person name="Callaghan A.V."/>
            <person name="Morris B.E."/>
            <person name="Pereira I.A."/>
            <person name="McInerney M.J."/>
            <person name="Austin R.N."/>
            <person name="Groves J.T."/>
            <person name="Kukor J.J."/>
            <person name="Suflita J.M."/>
            <person name="Young L.Y."/>
            <person name="Zylstra G.J."/>
            <person name="Wawrik B."/>
        </authorList>
    </citation>
    <scope>NUCLEOTIDE SEQUENCE [LARGE SCALE GENOMIC DNA]</scope>
    <source>
        <strain>AK-01</strain>
    </source>
</reference>
<protein>
    <recommendedName>
        <fullName evidence="1">Pantothenate synthetase</fullName>
        <shortName evidence="1">PS</shortName>
        <ecNumber evidence="1">6.3.2.1</ecNumber>
    </recommendedName>
    <alternativeName>
        <fullName evidence="1">Pantoate--beta-alanine ligase</fullName>
    </alternativeName>
    <alternativeName>
        <fullName evidence="1">Pantoate-activating enzyme</fullName>
    </alternativeName>
</protein>
<evidence type="ECO:0000255" key="1">
    <source>
        <dbReference type="HAMAP-Rule" id="MF_00158"/>
    </source>
</evidence>